<protein>
    <recommendedName>
        <fullName evidence="1">Tryptophan synthase alpha chain</fullName>
        <ecNumber evidence="1">4.2.1.20</ecNumber>
    </recommendedName>
</protein>
<feature type="chain" id="PRO_0000098870" description="Tryptophan synthase alpha chain">
    <location>
        <begin position="1"/>
        <end position="268"/>
    </location>
</feature>
<feature type="active site" description="Proton acceptor" evidence="1">
    <location>
        <position position="49"/>
    </location>
</feature>
<feature type="active site" description="Proton acceptor" evidence="1">
    <location>
        <position position="60"/>
    </location>
</feature>
<reference key="1">
    <citation type="submission" date="1992-12" db="EMBL/GenBank/DDBJ databases">
        <title>Cloning and sequence analysis of the trpB, trpA and 3'trpC genes of Vibrio metschinikovii strain RH530.</title>
        <authorList>
            <person name="Kwon Y."/>
            <person name="Moon S."/>
            <person name="Kim J."/>
            <person name="Yoo Y."/>
            <person name="Rho H."/>
        </authorList>
    </citation>
    <scope>NUCLEOTIDE SEQUENCE [GENOMIC DNA]</scope>
    <source>
        <strain>RH530</strain>
    </source>
</reference>
<organism>
    <name type="scientific">Vibrio metschnikovii</name>
    <dbReference type="NCBI Taxonomy" id="28172"/>
    <lineage>
        <taxon>Bacteria</taxon>
        <taxon>Pseudomonadati</taxon>
        <taxon>Pseudomonadota</taxon>
        <taxon>Gammaproteobacteria</taxon>
        <taxon>Vibrionales</taxon>
        <taxon>Vibrionaceae</taxon>
        <taxon>Vibrio</taxon>
    </lineage>
</organism>
<proteinExistence type="inferred from homology"/>
<accession>Q9RCE7</accession>
<comment type="function">
    <text evidence="1">The alpha subunit is responsible for the aldol cleavage of indoleglycerol phosphate to indole and glyceraldehyde 3-phosphate.</text>
</comment>
<comment type="catalytic activity">
    <reaction evidence="1">
        <text>(1S,2R)-1-C-(indol-3-yl)glycerol 3-phosphate + L-serine = D-glyceraldehyde 3-phosphate + L-tryptophan + H2O</text>
        <dbReference type="Rhea" id="RHEA:10532"/>
        <dbReference type="ChEBI" id="CHEBI:15377"/>
        <dbReference type="ChEBI" id="CHEBI:33384"/>
        <dbReference type="ChEBI" id="CHEBI:57912"/>
        <dbReference type="ChEBI" id="CHEBI:58866"/>
        <dbReference type="ChEBI" id="CHEBI:59776"/>
        <dbReference type="EC" id="4.2.1.20"/>
    </reaction>
</comment>
<comment type="pathway">
    <text evidence="1">Amino-acid biosynthesis; L-tryptophan biosynthesis; L-tryptophan from chorismate: step 5/5.</text>
</comment>
<comment type="subunit">
    <text evidence="1">Tetramer of two alpha and two beta chains.</text>
</comment>
<comment type="similarity">
    <text evidence="1">Belongs to the TrpA family.</text>
</comment>
<evidence type="ECO:0000255" key="1">
    <source>
        <dbReference type="HAMAP-Rule" id="MF_00131"/>
    </source>
</evidence>
<keyword id="KW-0028">Amino-acid biosynthesis</keyword>
<keyword id="KW-0057">Aromatic amino acid biosynthesis</keyword>
<keyword id="KW-0456">Lyase</keyword>
<keyword id="KW-0822">Tryptophan biosynthesis</keyword>
<dbReference type="EC" id="4.2.1.20" evidence="1"/>
<dbReference type="EMBL" id="Z19090">
    <property type="protein sequence ID" value="CAA79517.1"/>
    <property type="molecule type" value="Genomic_DNA"/>
</dbReference>
<dbReference type="SMR" id="Q9RCE7"/>
<dbReference type="UniPathway" id="UPA00035">
    <property type="reaction ID" value="UER00044"/>
</dbReference>
<dbReference type="GO" id="GO:0005829">
    <property type="term" value="C:cytosol"/>
    <property type="evidence" value="ECO:0007669"/>
    <property type="project" value="TreeGrafter"/>
</dbReference>
<dbReference type="GO" id="GO:0004834">
    <property type="term" value="F:tryptophan synthase activity"/>
    <property type="evidence" value="ECO:0007669"/>
    <property type="project" value="UniProtKB-UniRule"/>
</dbReference>
<dbReference type="CDD" id="cd04724">
    <property type="entry name" value="Tryptophan_synthase_alpha"/>
    <property type="match status" value="1"/>
</dbReference>
<dbReference type="FunFam" id="3.20.20.70:FF:000037">
    <property type="entry name" value="Tryptophan synthase alpha chain"/>
    <property type="match status" value="1"/>
</dbReference>
<dbReference type="Gene3D" id="3.20.20.70">
    <property type="entry name" value="Aldolase class I"/>
    <property type="match status" value="1"/>
</dbReference>
<dbReference type="HAMAP" id="MF_00131">
    <property type="entry name" value="Trp_synth_alpha"/>
    <property type="match status" value="1"/>
</dbReference>
<dbReference type="InterPro" id="IPR013785">
    <property type="entry name" value="Aldolase_TIM"/>
</dbReference>
<dbReference type="InterPro" id="IPR011060">
    <property type="entry name" value="RibuloseP-bd_barrel"/>
</dbReference>
<dbReference type="InterPro" id="IPR018204">
    <property type="entry name" value="Trp_synthase_alpha_AS"/>
</dbReference>
<dbReference type="InterPro" id="IPR002028">
    <property type="entry name" value="Trp_synthase_suA"/>
</dbReference>
<dbReference type="NCBIfam" id="TIGR00262">
    <property type="entry name" value="trpA"/>
    <property type="match status" value="1"/>
</dbReference>
<dbReference type="PANTHER" id="PTHR43406:SF1">
    <property type="entry name" value="TRYPTOPHAN SYNTHASE ALPHA CHAIN, CHLOROPLASTIC"/>
    <property type="match status" value="1"/>
</dbReference>
<dbReference type="PANTHER" id="PTHR43406">
    <property type="entry name" value="TRYPTOPHAN SYNTHASE, ALPHA CHAIN"/>
    <property type="match status" value="1"/>
</dbReference>
<dbReference type="Pfam" id="PF00290">
    <property type="entry name" value="Trp_syntA"/>
    <property type="match status" value="1"/>
</dbReference>
<dbReference type="SUPFAM" id="SSF51366">
    <property type="entry name" value="Ribulose-phoshate binding barrel"/>
    <property type="match status" value="1"/>
</dbReference>
<dbReference type="PROSITE" id="PS00167">
    <property type="entry name" value="TRP_SYNTHASE_ALPHA"/>
    <property type="match status" value="1"/>
</dbReference>
<gene>
    <name evidence="1" type="primary">trpA</name>
</gene>
<sequence length="268" mass="28786">MDRYQHLFQRLAAHNQGAFVPFVTIGDPNPQQSLRIMQTLVEAGADALELGIPFSDPLADGPTIQGAISALDSGTKPIRCFEADQAPIRAQDIPIYLLMYANLVYARGIDNFYQRCQQAGVDSVLIADVPTNESAEFGPAAKKYAIHPIFIAPPTASDETLQSVAELGSGYTYLLSRSGVTGAETKANMPVHALLERLNQFSAPPRRLGFGISEPEQVKQAIESGAAGAISGSAVVKIIEHHLAKPEAMLAELKTFVSAMKSATKHDK</sequence>
<name>TRPA_VIBME</name>